<protein>
    <recommendedName>
        <fullName evidence="1">ATP synthase subunit c, chloroplastic</fullName>
    </recommendedName>
    <alternativeName>
        <fullName evidence="1">ATP synthase F(0) sector subunit c</fullName>
    </alternativeName>
    <alternativeName>
        <fullName evidence="1">ATPase subunit III</fullName>
    </alternativeName>
    <alternativeName>
        <fullName evidence="1">F-type ATPase subunit c</fullName>
        <shortName evidence="1">F-ATPase subunit c</shortName>
    </alternativeName>
    <alternativeName>
        <fullName evidence="1">Lipid-binding protein</fullName>
    </alternativeName>
</protein>
<feature type="chain" id="PRO_0000112205" description="ATP synthase subunit c, chloroplastic">
    <location>
        <begin position="1"/>
        <end position="81"/>
    </location>
</feature>
<feature type="transmembrane region" description="Helical" evidence="1">
    <location>
        <begin position="3"/>
        <end position="23"/>
    </location>
</feature>
<feature type="transmembrane region" description="Helical" evidence="1">
    <location>
        <begin position="57"/>
        <end position="77"/>
    </location>
</feature>
<feature type="site" description="Reversibly protonated during proton transport" evidence="1">
    <location>
        <position position="61"/>
    </location>
</feature>
<feature type="modified residue" description="N-formylmethionine" evidence="3">
    <location>
        <position position="1"/>
    </location>
</feature>
<feature type="helix" evidence="4">
    <location>
        <begin position="2"/>
        <end position="19"/>
    </location>
</feature>
<feature type="helix" evidence="4">
    <location>
        <begin position="22"/>
        <end position="41"/>
    </location>
</feature>
<feature type="helix" evidence="4">
    <location>
        <begin position="43"/>
        <end position="45"/>
    </location>
</feature>
<feature type="helix" evidence="4">
    <location>
        <begin position="46"/>
        <end position="76"/>
    </location>
</feature>
<keyword id="KW-0002">3D-structure</keyword>
<keyword id="KW-0066">ATP synthesis</keyword>
<keyword id="KW-0138">CF(0)</keyword>
<keyword id="KW-0150">Chloroplast</keyword>
<keyword id="KW-0903">Direct protein sequencing</keyword>
<keyword id="KW-0291">Formylation</keyword>
<keyword id="KW-0375">Hydrogen ion transport</keyword>
<keyword id="KW-0406">Ion transport</keyword>
<keyword id="KW-0446">Lipid-binding</keyword>
<keyword id="KW-0472">Membrane</keyword>
<keyword id="KW-0934">Plastid</keyword>
<keyword id="KW-1185">Reference proteome</keyword>
<keyword id="KW-0793">Thylakoid</keyword>
<keyword id="KW-0812">Transmembrane</keyword>
<keyword id="KW-1133">Transmembrane helix</keyword>
<keyword id="KW-0813">Transport</keyword>
<name>ATPH_SPIOL</name>
<organism>
    <name type="scientific">Spinacia oleracea</name>
    <name type="common">Spinach</name>
    <dbReference type="NCBI Taxonomy" id="3562"/>
    <lineage>
        <taxon>Eukaryota</taxon>
        <taxon>Viridiplantae</taxon>
        <taxon>Streptophyta</taxon>
        <taxon>Embryophyta</taxon>
        <taxon>Tracheophyta</taxon>
        <taxon>Spermatophyta</taxon>
        <taxon>Magnoliopsida</taxon>
        <taxon>eudicotyledons</taxon>
        <taxon>Gunneridae</taxon>
        <taxon>Pentapetalae</taxon>
        <taxon>Caryophyllales</taxon>
        <taxon>Chenopodiaceae</taxon>
        <taxon>Chenopodioideae</taxon>
        <taxon>Anserineae</taxon>
        <taxon>Spinacia</taxon>
    </lineage>
</organism>
<gene>
    <name evidence="1" type="primary">atpH</name>
</gene>
<dbReference type="EMBL" id="X03775">
    <property type="protein sequence ID" value="CAA27402.1"/>
    <property type="molecule type" value="Genomic_DNA"/>
</dbReference>
<dbReference type="EMBL" id="AJ400848">
    <property type="protein sequence ID" value="CAB88712.1"/>
    <property type="molecule type" value="Genomic_DNA"/>
</dbReference>
<dbReference type="PIR" id="S14423">
    <property type="entry name" value="LWSPA"/>
</dbReference>
<dbReference type="RefSeq" id="NP_054919.1">
    <property type="nucleotide sequence ID" value="NC_002202.1"/>
</dbReference>
<dbReference type="PDB" id="2W5J">
    <property type="method" value="X-ray"/>
    <property type="resolution" value="3.80 A"/>
    <property type="chains" value="A/B/C/D/E/F/G/H/I/J/K/L/M/V=2-79"/>
</dbReference>
<dbReference type="PDB" id="6FKF">
    <property type="method" value="EM"/>
    <property type="resolution" value="3.10 A"/>
    <property type="chains" value="G/H/I/J/K/L/M/N/O/P/Q/R/S/T=1-81"/>
</dbReference>
<dbReference type="PDB" id="6FKH">
    <property type="method" value="EM"/>
    <property type="resolution" value="4.20 A"/>
    <property type="chains" value="G/H/I/J/K/L/M/N/O/P/Q/R/S/T=1-81"/>
</dbReference>
<dbReference type="PDB" id="6FKI">
    <property type="method" value="EM"/>
    <property type="resolution" value="4.30 A"/>
    <property type="chains" value="G/H/I/J/K/L/M/N/O/P/Q/R/S/T=1-81"/>
</dbReference>
<dbReference type="PDB" id="6TQJ">
    <property type="method" value="X-ray"/>
    <property type="resolution" value="2.30 A"/>
    <property type="chains" value="A/B/C/D/E/F/G/H/I/J/K/L/M/N=1-81"/>
</dbReference>
<dbReference type="PDB" id="6VM1">
    <property type="method" value="EM"/>
    <property type="resolution" value="7.90 A"/>
    <property type="chains" value="M/N/O/P/Q/R/S/T/U/V/W/X/Y/Z=1-81"/>
</dbReference>
<dbReference type="PDB" id="6VM4">
    <property type="method" value="EM"/>
    <property type="resolution" value="7.08 A"/>
    <property type="chains" value="M/N/O/P/Q/R/S/T/U/V/W/X/Y/Z=1-81"/>
</dbReference>
<dbReference type="PDB" id="6VMB">
    <property type="method" value="EM"/>
    <property type="resolution" value="5.23 A"/>
    <property type="chains" value="M/N/O/P/Q/R/S/T/U/V/W/X/Y/Z=1-81"/>
</dbReference>
<dbReference type="PDB" id="6VMG">
    <property type="method" value="EM"/>
    <property type="resolution" value="6.46 A"/>
    <property type="chains" value="M/N/O/P/Q/R/S/T/U/V/W/X/Y/Z=1-81"/>
</dbReference>
<dbReference type="PDB" id="6VOF">
    <property type="method" value="EM"/>
    <property type="resolution" value="4.51 A"/>
    <property type="chains" value="M/N/O/P/Q/R/S/T/U/V/W/X/Y/Z=1-81"/>
</dbReference>
<dbReference type="PDB" id="6VOH">
    <property type="method" value="EM"/>
    <property type="resolution" value="4.16 A"/>
    <property type="chains" value="M/N/O/P/Q/R/S/T/U/V/W/X/Y/Z=1-81"/>
</dbReference>
<dbReference type="PDB" id="6VOJ">
    <property type="method" value="EM"/>
    <property type="resolution" value="4.34 A"/>
    <property type="chains" value="M/N/O/P/Q/R/S/T/U/V/W/X/Y/Z=1-81"/>
</dbReference>
<dbReference type="PDB" id="6VOL">
    <property type="method" value="EM"/>
    <property type="resolution" value="4.06 A"/>
    <property type="chains" value="M/N/O/P/Q/R/S/T/U/V/W/X/Y/Z=1-81"/>
</dbReference>
<dbReference type="PDB" id="6VON">
    <property type="method" value="EM"/>
    <property type="resolution" value="3.35 A"/>
    <property type="chains" value="M/N/O/P/Q/R/S/T/U/V/W/X/Y/Z=1-81"/>
</dbReference>
<dbReference type="PDBsum" id="2W5J"/>
<dbReference type="PDBsum" id="6FKF"/>
<dbReference type="PDBsum" id="6FKH"/>
<dbReference type="PDBsum" id="6FKI"/>
<dbReference type="PDBsum" id="6TQJ"/>
<dbReference type="PDBsum" id="6VM1"/>
<dbReference type="PDBsum" id="6VM4"/>
<dbReference type="PDBsum" id="6VMB"/>
<dbReference type="PDBsum" id="6VMG"/>
<dbReference type="PDBsum" id="6VOF"/>
<dbReference type="PDBsum" id="6VOH"/>
<dbReference type="PDBsum" id="6VOJ"/>
<dbReference type="PDBsum" id="6VOL"/>
<dbReference type="PDBsum" id="6VON"/>
<dbReference type="EMDB" id="EMD-21235"/>
<dbReference type="EMDB" id="EMD-21238"/>
<dbReference type="EMDB" id="EMD-21239"/>
<dbReference type="EMDB" id="EMD-21241"/>
<dbReference type="EMDB" id="EMD-21262"/>
<dbReference type="EMDB" id="EMD-21264"/>
<dbReference type="EMDB" id="EMD-21266"/>
<dbReference type="EMDB" id="EMD-21268"/>
<dbReference type="EMDB" id="EMD-21270"/>
<dbReference type="EMDB" id="EMD-4270"/>
<dbReference type="EMDB" id="EMD-4271"/>
<dbReference type="EMDB" id="EMD-4272"/>
<dbReference type="SASBDB" id="P69447"/>
<dbReference type="SMR" id="P69447"/>
<dbReference type="FunCoup" id="P69447">
    <property type="interactions" value="94"/>
</dbReference>
<dbReference type="IntAct" id="P69447">
    <property type="interactions" value="1"/>
</dbReference>
<dbReference type="STRING" id="3562.P69447"/>
<dbReference type="ChEMBL" id="CHEMBL2366567"/>
<dbReference type="GeneID" id="2715579"/>
<dbReference type="KEGG" id="soe:2715579"/>
<dbReference type="InParanoid" id="P69447"/>
<dbReference type="OrthoDB" id="438052at2759"/>
<dbReference type="BRENDA" id="7.1.2.2">
    <property type="organism ID" value="5812"/>
</dbReference>
<dbReference type="EvolutionaryTrace" id="P69447"/>
<dbReference type="PRO" id="PR:P69447"/>
<dbReference type="Proteomes" id="UP001155700">
    <property type="component" value="Chloroplast Pltd"/>
</dbReference>
<dbReference type="GO" id="GO:0009535">
    <property type="term" value="C:chloroplast thylakoid membrane"/>
    <property type="evidence" value="ECO:0007669"/>
    <property type="project" value="UniProtKB-SubCell"/>
</dbReference>
<dbReference type="GO" id="GO:0045259">
    <property type="term" value="C:proton-transporting ATP synthase complex"/>
    <property type="evidence" value="ECO:0007669"/>
    <property type="project" value="UniProtKB-KW"/>
</dbReference>
<dbReference type="GO" id="GO:0033177">
    <property type="term" value="C:proton-transporting two-sector ATPase complex, proton-transporting domain"/>
    <property type="evidence" value="ECO:0007669"/>
    <property type="project" value="InterPro"/>
</dbReference>
<dbReference type="GO" id="GO:0008289">
    <property type="term" value="F:lipid binding"/>
    <property type="evidence" value="ECO:0007669"/>
    <property type="project" value="UniProtKB-KW"/>
</dbReference>
<dbReference type="GO" id="GO:0046933">
    <property type="term" value="F:proton-transporting ATP synthase activity, rotational mechanism"/>
    <property type="evidence" value="ECO:0007669"/>
    <property type="project" value="UniProtKB-UniRule"/>
</dbReference>
<dbReference type="GO" id="GO:0015986">
    <property type="term" value="P:proton motive force-driven ATP synthesis"/>
    <property type="evidence" value="ECO:0000318"/>
    <property type="project" value="GO_Central"/>
</dbReference>
<dbReference type="CDD" id="cd18183">
    <property type="entry name" value="ATP-synt_Fo_c_ATPH"/>
    <property type="match status" value="1"/>
</dbReference>
<dbReference type="FunFam" id="1.20.20.10:FF:000001">
    <property type="entry name" value="ATP synthase subunit c, chloroplastic"/>
    <property type="match status" value="1"/>
</dbReference>
<dbReference type="Gene3D" id="1.20.20.10">
    <property type="entry name" value="F1F0 ATP synthase subunit C"/>
    <property type="match status" value="1"/>
</dbReference>
<dbReference type="HAMAP" id="MF_01396">
    <property type="entry name" value="ATP_synth_c_bact"/>
    <property type="match status" value="1"/>
</dbReference>
<dbReference type="InterPro" id="IPR005953">
    <property type="entry name" value="ATP_synth_csu_bac/chlpt"/>
</dbReference>
<dbReference type="InterPro" id="IPR000454">
    <property type="entry name" value="ATP_synth_F0_csu"/>
</dbReference>
<dbReference type="InterPro" id="IPR020537">
    <property type="entry name" value="ATP_synth_F0_csu_DDCD_BS"/>
</dbReference>
<dbReference type="InterPro" id="IPR038662">
    <property type="entry name" value="ATP_synth_F0_csu_sf"/>
</dbReference>
<dbReference type="InterPro" id="IPR002379">
    <property type="entry name" value="ATPase_proteolipid_c-like_dom"/>
</dbReference>
<dbReference type="InterPro" id="IPR035921">
    <property type="entry name" value="F/V-ATP_Csub_sf"/>
</dbReference>
<dbReference type="NCBIfam" id="TIGR01260">
    <property type="entry name" value="ATP_synt_c"/>
    <property type="match status" value="1"/>
</dbReference>
<dbReference type="NCBIfam" id="NF005608">
    <property type="entry name" value="PRK07354.1"/>
    <property type="match status" value="1"/>
</dbReference>
<dbReference type="PANTHER" id="PTHR10031">
    <property type="entry name" value="ATP SYNTHASE LIPID-BINDING PROTEIN, MITOCHONDRIAL"/>
    <property type="match status" value="1"/>
</dbReference>
<dbReference type="PANTHER" id="PTHR10031:SF0">
    <property type="entry name" value="ATPASE PROTEIN 9"/>
    <property type="match status" value="1"/>
</dbReference>
<dbReference type="Pfam" id="PF00137">
    <property type="entry name" value="ATP-synt_C"/>
    <property type="match status" value="1"/>
</dbReference>
<dbReference type="PRINTS" id="PR00124">
    <property type="entry name" value="ATPASEC"/>
</dbReference>
<dbReference type="SUPFAM" id="SSF81333">
    <property type="entry name" value="F1F0 ATP synthase subunit C"/>
    <property type="match status" value="1"/>
</dbReference>
<dbReference type="PROSITE" id="PS00605">
    <property type="entry name" value="ATPASE_C"/>
    <property type="match status" value="1"/>
</dbReference>
<proteinExistence type="evidence at protein level"/>
<comment type="function">
    <text>F(1)F(0) ATP synthase produces ATP from ADP in the presence of a proton or sodium gradient. F-type ATPases consist of two structural domains, F(1) containing the extramembraneous catalytic core and F(0) containing the membrane proton channel, linked together by a central stalk and a peripheral stalk. During catalysis, ATP synthesis in the catalytic domain of F(1) is coupled via a rotary mechanism of the central stalk subunits to proton translocation.</text>
</comment>
<comment type="function">
    <text>Key component of the F(0) channel; it plays a direct role in translocation across the membrane. A homomeric c-ring of 14 subunits forms the central stalk rotor element with the F(1) delta and epsilon subunits.</text>
</comment>
<comment type="subunit">
    <text evidence="2">F-type ATPases have 2 components, F(1) - the catalytic core - and F(0) - the membrane proton channel. F(1) has five subunits: alpha(3), beta(3), gamma(1), delta(1), epsilon(1). F(0) has four main subunits: a(1), b(1), b'(1) and c(14). The alpha and beta chains form an alternating ring which encloses part of the gamma chain. F(1) is attached to F(0) by a central stalk formed by the gamma and epsilon chains, while a peripheral stalk is formed by the delta, b and b' chains.</text>
</comment>
<comment type="subcellular location">
    <subcellularLocation>
        <location>Plastid</location>
        <location>Chloroplast thylakoid membrane</location>
        <topology>Multi-pass membrane protein</topology>
    </subcellularLocation>
</comment>
<comment type="miscellaneous">
    <text>In plastids the F-type ATPase is also known as CF(1)CF(0).</text>
</comment>
<comment type="similarity">
    <text evidence="1">Belongs to the ATPase C chain family.</text>
</comment>
<accession>P69447</accession>
<accession>P00843</accession>
<accession>Q33180</accession>
<accession>Q9XPT1</accession>
<geneLocation type="chloroplast"/>
<sequence>MNPLIAAASVIAAGLAVGLASIGPGVGQGTAAGQAVEGIARQPEAEGKIRGTLLLSLAFMEALTIYGLVVALALLFANPFV</sequence>
<reference key="1">
    <citation type="journal article" date="1980" name="FEBS Lett.">
        <title>Amino acid sequence of the proteolipid subunit of the ATP synthase from spinach chloroplasts.</title>
        <authorList>
            <person name="Sebald W."/>
            <person name="Wachter E."/>
        </authorList>
    </citation>
    <scope>PROTEIN SEQUENCE</scope>
    <scope>FORMYLATION AT MET-1</scope>
</reference>
<reference key="2">
    <citation type="journal article" date="1983" name="Curr. Genet.">
        <title>Localization and nucleotide sequence of the gene for the ATP synthase proteolipid subunit on the spinach plastid chromosome.</title>
        <authorList>
            <person name="Alt J."/>
            <person name="Winter P."/>
            <person name="Sebald W."/>
            <person name="Moser J.G."/>
            <person name="Schedel R."/>
            <person name="Westhoff P."/>
            <person name="Herrmann R.G."/>
        </authorList>
    </citation>
    <scope>NUCLEOTIDE SEQUENCE [GENOMIC DNA]</scope>
</reference>
<reference key="3">
    <citation type="journal article" date="1986" name="Mol. Gen. Genet.">
        <title>Chloroplast ATP synthase of spinach contains nine nonidentical subunit species, six of which are encoded by plastid chromosomes in two operons in a phylogenetically conserved arrangement.</title>
        <authorList>
            <person name="Hennig J."/>
            <person name="Herrmann R.G."/>
        </authorList>
    </citation>
    <scope>NUCLEOTIDE SEQUENCE [GENOMIC DNA]</scope>
</reference>
<reference key="4">
    <citation type="journal article" date="1987" name="J. Mol. Biol.">
        <title>A gene cluster in the spinach and pea chloroplast genomes encoding one CF1 and three CF0 subunits of the H+-ATP synthase complex and the ribosomal protein S2.</title>
        <authorList>
            <person name="Hudson G.S."/>
            <person name="Mason J.G."/>
            <person name="Holton T.A."/>
            <person name="Koller B."/>
            <person name="Cox G.B."/>
            <person name="Whitfeld P.R."/>
            <person name="Bottomley W."/>
        </authorList>
    </citation>
    <scope>NUCLEOTIDE SEQUENCE [GENOMIC DNA]</scope>
</reference>
<reference key="5">
    <citation type="journal article" date="2001" name="Plant Mol. Biol.">
        <title>The plastid chromosome of spinach (Spinacia oleracea): complete nucleotide sequence and gene organization.</title>
        <authorList>
            <person name="Schmitz-Linneweber C."/>
            <person name="Maier R.M."/>
            <person name="Alcaraz J.-P."/>
            <person name="Cottet A."/>
            <person name="Herrmann R.G."/>
            <person name="Mache R."/>
        </authorList>
    </citation>
    <scope>NUCLEOTIDE SEQUENCE [LARGE SCALE GENOMIC DNA]</scope>
    <source>
        <strain>cv. Geant d'hiver</strain>
        <strain>cv. Monatol</strain>
    </source>
</reference>
<reference key="6">
    <citation type="journal article" date="2008" name="Biochim. Biophys. Acta">
        <title>Crystallization of the c14-rotor of the chloroplast ATP synthase reveals that it contains pigments.</title>
        <authorList>
            <person name="Varco-Merth B."/>
            <person name="Fromme R."/>
            <person name="Wang M."/>
            <person name="Fromme P."/>
        </authorList>
    </citation>
    <scope>SUBUNIT</scope>
    <scope>PRELIMINARY CRYSTALLIZATION</scope>
    <scope>PIGMENT COMPOSITION</scope>
</reference>
<evidence type="ECO:0000255" key="1">
    <source>
        <dbReference type="HAMAP-Rule" id="MF_01396"/>
    </source>
</evidence>
<evidence type="ECO:0000269" key="2">
    <source>
    </source>
</evidence>
<evidence type="ECO:0000269" key="3">
    <source ref="1"/>
</evidence>
<evidence type="ECO:0007829" key="4">
    <source>
        <dbReference type="PDB" id="6TQJ"/>
    </source>
</evidence>